<name>CH10_MYCBP</name>
<organism>
    <name type="scientific">Mycobacterium bovis (strain BCG / Pasteur 1173P2)</name>
    <dbReference type="NCBI Taxonomy" id="410289"/>
    <lineage>
        <taxon>Bacteria</taxon>
        <taxon>Bacillati</taxon>
        <taxon>Actinomycetota</taxon>
        <taxon>Actinomycetes</taxon>
        <taxon>Mycobacteriales</taxon>
        <taxon>Mycobacteriaceae</taxon>
        <taxon>Mycobacterium</taxon>
        <taxon>Mycobacterium tuberculosis complex</taxon>
    </lineage>
</organism>
<gene>
    <name evidence="1" type="primary">groES</name>
    <name evidence="1" type="synonym">groS</name>
    <name type="ordered locus">BCG_3488c</name>
</gene>
<proteinExistence type="inferred from homology"/>
<feature type="chain" id="PRO_1000025303" description="Co-chaperonin GroES">
    <location>
        <begin position="1"/>
        <end position="100"/>
    </location>
</feature>
<dbReference type="EMBL" id="AM408590">
    <property type="protein sequence ID" value="CAL73477.1"/>
    <property type="molecule type" value="Genomic_DNA"/>
</dbReference>
<dbReference type="RefSeq" id="WP_003418028.1">
    <property type="nucleotide sequence ID" value="NC_008769.1"/>
</dbReference>
<dbReference type="SMR" id="A1KPA9"/>
<dbReference type="GeneID" id="66599586"/>
<dbReference type="KEGG" id="mbb:BCG_3488c"/>
<dbReference type="HOGENOM" id="CLU_132825_2_0_11"/>
<dbReference type="Proteomes" id="UP000001472">
    <property type="component" value="Chromosome"/>
</dbReference>
<dbReference type="GO" id="GO:0005737">
    <property type="term" value="C:cytoplasm"/>
    <property type="evidence" value="ECO:0007669"/>
    <property type="project" value="UniProtKB-SubCell"/>
</dbReference>
<dbReference type="GO" id="GO:0005524">
    <property type="term" value="F:ATP binding"/>
    <property type="evidence" value="ECO:0007669"/>
    <property type="project" value="InterPro"/>
</dbReference>
<dbReference type="GO" id="GO:0046872">
    <property type="term" value="F:metal ion binding"/>
    <property type="evidence" value="ECO:0007669"/>
    <property type="project" value="TreeGrafter"/>
</dbReference>
<dbReference type="GO" id="GO:0044183">
    <property type="term" value="F:protein folding chaperone"/>
    <property type="evidence" value="ECO:0007669"/>
    <property type="project" value="InterPro"/>
</dbReference>
<dbReference type="GO" id="GO:0051087">
    <property type="term" value="F:protein-folding chaperone binding"/>
    <property type="evidence" value="ECO:0007669"/>
    <property type="project" value="TreeGrafter"/>
</dbReference>
<dbReference type="GO" id="GO:0051082">
    <property type="term" value="F:unfolded protein binding"/>
    <property type="evidence" value="ECO:0007669"/>
    <property type="project" value="TreeGrafter"/>
</dbReference>
<dbReference type="GO" id="GO:0051085">
    <property type="term" value="P:chaperone cofactor-dependent protein refolding"/>
    <property type="evidence" value="ECO:0007669"/>
    <property type="project" value="TreeGrafter"/>
</dbReference>
<dbReference type="CDD" id="cd00320">
    <property type="entry name" value="cpn10"/>
    <property type="match status" value="1"/>
</dbReference>
<dbReference type="FunFam" id="2.30.33.40:FF:000001">
    <property type="entry name" value="10 kDa chaperonin"/>
    <property type="match status" value="1"/>
</dbReference>
<dbReference type="Gene3D" id="2.30.33.40">
    <property type="entry name" value="GroES chaperonin"/>
    <property type="match status" value="1"/>
</dbReference>
<dbReference type="HAMAP" id="MF_00580">
    <property type="entry name" value="CH10"/>
    <property type="match status" value="1"/>
</dbReference>
<dbReference type="InterPro" id="IPR020818">
    <property type="entry name" value="Chaperonin_GroES"/>
</dbReference>
<dbReference type="InterPro" id="IPR037124">
    <property type="entry name" value="Chaperonin_GroES_sf"/>
</dbReference>
<dbReference type="InterPro" id="IPR018369">
    <property type="entry name" value="Chaprnonin_Cpn10_CS"/>
</dbReference>
<dbReference type="InterPro" id="IPR011032">
    <property type="entry name" value="GroES-like_sf"/>
</dbReference>
<dbReference type="NCBIfam" id="NF001530">
    <property type="entry name" value="PRK00364.1-6"/>
    <property type="match status" value="1"/>
</dbReference>
<dbReference type="NCBIfam" id="NF001531">
    <property type="entry name" value="PRK00364.2-2"/>
    <property type="match status" value="1"/>
</dbReference>
<dbReference type="NCBIfam" id="NF001533">
    <property type="entry name" value="PRK00364.2-4"/>
    <property type="match status" value="1"/>
</dbReference>
<dbReference type="NCBIfam" id="NF001534">
    <property type="entry name" value="PRK00364.2-5"/>
    <property type="match status" value="1"/>
</dbReference>
<dbReference type="PANTHER" id="PTHR10772">
    <property type="entry name" value="10 KDA HEAT SHOCK PROTEIN"/>
    <property type="match status" value="1"/>
</dbReference>
<dbReference type="PANTHER" id="PTHR10772:SF58">
    <property type="entry name" value="CO-CHAPERONIN GROES"/>
    <property type="match status" value="1"/>
</dbReference>
<dbReference type="Pfam" id="PF00166">
    <property type="entry name" value="Cpn10"/>
    <property type="match status" value="1"/>
</dbReference>
<dbReference type="PRINTS" id="PR00297">
    <property type="entry name" value="CHAPERONIN10"/>
</dbReference>
<dbReference type="SMART" id="SM00883">
    <property type="entry name" value="Cpn10"/>
    <property type="match status" value="1"/>
</dbReference>
<dbReference type="SUPFAM" id="SSF50129">
    <property type="entry name" value="GroES-like"/>
    <property type="match status" value="1"/>
</dbReference>
<dbReference type="PROSITE" id="PS00681">
    <property type="entry name" value="CHAPERONINS_CPN10"/>
    <property type="match status" value="1"/>
</dbReference>
<protein>
    <recommendedName>
        <fullName evidence="1">Co-chaperonin GroES</fullName>
    </recommendedName>
    <alternativeName>
        <fullName evidence="1">10 kDa chaperonin</fullName>
    </alternativeName>
    <alternativeName>
        <fullName evidence="1">Chaperonin-10</fullName>
        <shortName evidence="1">Cpn10</shortName>
    </alternativeName>
</protein>
<keyword id="KW-0143">Chaperone</keyword>
<keyword id="KW-0963">Cytoplasm</keyword>
<sequence>MAKVNIKPLEDKILVQANEAETTTASGLVIPDTAKEKPQEGTVVAVGPGRWDEDGEKRIPLDVAEGDTVIYSKYGGTEIKYNGEEYLILSARDVLAVVSK</sequence>
<comment type="function">
    <text evidence="1">Together with the chaperonin GroEL, plays an essential role in assisting protein folding. The GroEL-GroES system forms a nano-cage that allows encapsulation of the non-native substrate proteins and provides a physical environment optimized to promote and accelerate protein folding. GroES binds to the apical surface of the GroEL ring, thereby capping the opening of the GroEL channel.</text>
</comment>
<comment type="subunit">
    <text evidence="1">Heptamer of 7 subunits arranged in a ring. Interacts with the chaperonin GroEL.</text>
</comment>
<comment type="subcellular location">
    <subcellularLocation>
        <location evidence="1">Cytoplasm</location>
    </subcellularLocation>
</comment>
<comment type="similarity">
    <text evidence="1">Belongs to the GroES chaperonin family.</text>
</comment>
<evidence type="ECO:0000255" key="1">
    <source>
        <dbReference type="HAMAP-Rule" id="MF_00580"/>
    </source>
</evidence>
<reference key="1">
    <citation type="journal article" date="2007" name="Proc. Natl. Acad. Sci. U.S.A.">
        <title>Genome plasticity of BCG and impact on vaccine efficacy.</title>
        <authorList>
            <person name="Brosch R."/>
            <person name="Gordon S.V."/>
            <person name="Garnier T."/>
            <person name="Eiglmeier K."/>
            <person name="Frigui W."/>
            <person name="Valenti P."/>
            <person name="Dos Santos S."/>
            <person name="Duthoy S."/>
            <person name="Lacroix C."/>
            <person name="Garcia-Pelayo C."/>
            <person name="Inwald J.K."/>
            <person name="Golby P."/>
            <person name="Garcia J.N."/>
            <person name="Hewinson R.G."/>
            <person name="Behr M.A."/>
            <person name="Quail M.A."/>
            <person name="Churcher C."/>
            <person name="Barrell B.G."/>
            <person name="Parkhill J."/>
            <person name="Cole S.T."/>
        </authorList>
    </citation>
    <scope>NUCLEOTIDE SEQUENCE [LARGE SCALE GENOMIC DNA]</scope>
    <source>
        <strain>BCG / Pasteur 1173P2</strain>
    </source>
</reference>
<accession>A1KPA9</accession>